<sequence length="347" mass="36979">MSESNLKGRKVVLHDMCLRDGMHAKREQISVEQMVKVATALDDAGIPYLQVTHGAGLGGNSLQHGFALASNEEYIAAVASRMKQAKVSVLLIPGLGTMRELQAAYDAGARSVHVATHCTEADTAPQHIAFARKLGMDTTGFLMMSHLNDAAGIAQQGKLMESYGAQTVYVTDSAGYMLPADVTARVRALREVLNPETEIGFHGHHNLGMGIANSIAAIEAGATRIDGSVAGLGAGAGNTPLEVFAAVCERMGIETGVDLFKLMDVAEDVIVPMMDHMVRVDRESLTLGFAGVYSTFLLHAKRAAERFGVPARDILVELGRKKMIGGQEDMIQDTAMTMARERGVSAA</sequence>
<reference key="1">
    <citation type="journal article" date="2006" name="Nat. Biotechnol.">
        <title>Complete genome of the mutualistic, N2-fixing grass endophyte Azoarcus sp. strain BH72.</title>
        <authorList>
            <person name="Krause A."/>
            <person name="Ramakumar A."/>
            <person name="Bartels D."/>
            <person name="Battistoni F."/>
            <person name="Bekel T."/>
            <person name="Boch J."/>
            <person name="Boehm M."/>
            <person name="Friedrich F."/>
            <person name="Hurek T."/>
            <person name="Krause L."/>
            <person name="Linke B."/>
            <person name="McHardy A.C."/>
            <person name="Sarkar A."/>
            <person name="Schneiker S."/>
            <person name="Syed A.A."/>
            <person name="Thauer R."/>
            <person name="Vorhoelter F.-J."/>
            <person name="Weidner S."/>
            <person name="Puehler A."/>
            <person name="Reinhold-Hurek B."/>
            <person name="Kaiser O."/>
            <person name="Goesmann A."/>
        </authorList>
    </citation>
    <scope>NUCLEOTIDE SEQUENCE [LARGE SCALE GENOMIC DNA]</scope>
    <source>
        <strain>BH72</strain>
    </source>
</reference>
<protein>
    <recommendedName>
        <fullName evidence="1">4-hydroxy-2-oxovalerate aldolase 1</fullName>
        <shortName evidence="1">HOA 1</shortName>
        <ecNumber evidence="1">4.1.3.39</ecNumber>
    </recommendedName>
    <alternativeName>
        <fullName evidence="1">4-hydroxy-2-keto-pentanoic acid aldolase 1</fullName>
    </alternativeName>
    <alternativeName>
        <fullName evidence="1">4-hydroxy-2-oxopentanoate aldolase 1</fullName>
    </alternativeName>
</protein>
<comment type="catalytic activity">
    <reaction evidence="1">
        <text>(S)-4-hydroxy-2-oxopentanoate = acetaldehyde + pyruvate</text>
        <dbReference type="Rhea" id="RHEA:22624"/>
        <dbReference type="ChEBI" id="CHEBI:15343"/>
        <dbReference type="ChEBI" id="CHEBI:15361"/>
        <dbReference type="ChEBI" id="CHEBI:73143"/>
        <dbReference type="EC" id="4.1.3.39"/>
    </reaction>
</comment>
<comment type="similarity">
    <text evidence="1">Belongs to the 4-hydroxy-2-oxovalerate aldolase family.</text>
</comment>
<gene>
    <name type="primary">lapG</name>
    <name type="ordered locus">azo1857</name>
</gene>
<evidence type="ECO:0000255" key="1">
    <source>
        <dbReference type="HAMAP-Rule" id="MF_01656"/>
    </source>
</evidence>
<name>HOA1_AZOSB</name>
<proteinExistence type="inferred from homology"/>
<feature type="chain" id="PRO_0000387780" description="4-hydroxy-2-oxovalerate aldolase 1">
    <location>
        <begin position="1"/>
        <end position="347"/>
    </location>
</feature>
<feature type="domain" description="Pyruvate carboxyltransferase" evidence="1">
    <location>
        <begin position="11"/>
        <end position="263"/>
    </location>
</feature>
<feature type="active site" description="Proton acceptor" evidence="1">
    <location>
        <position position="23"/>
    </location>
</feature>
<feature type="binding site" evidence="1">
    <location>
        <begin position="19"/>
        <end position="20"/>
    </location>
    <ligand>
        <name>substrate</name>
    </ligand>
</feature>
<feature type="binding site" evidence="1">
    <location>
        <position position="20"/>
    </location>
    <ligand>
        <name>Mn(2+)</name>
        <dbReference type="ChEBI" id="CHEBI:29035"/>
    </ligand>
</feature>
<feature type="binding site" evidence="1">
    <location>
        <position position="173"/>
    </location>
    <ligand>
        <name>substrate</name>
    </ligand>
</feature>
<feature type="binding site" evidence="1">
    <location>
        <position position="202"/>
    </location>
    <ligand>
        <name>Mn(2+)</name>
        <dbReference type="ChEBI" id="CHEBI:29035"/>
    </ligand>
</feature>
<feature type="binding site" evidence="1">
    <location>
        <position position="202"/>
    </location>
    <ligand>
        <name>substrate</name>
    </ligand>
</feature>
<feature type="binding site" evidence="1">
    <location>
        <position position="204"/>
    </location>
    <ligand>
        <name>Mn(2+)</name>
        <dbReference type="ChEBI" id="CHEBI:29035"/>
    </ligand>
</feature>
<feature type="binding site" evidence="1">
    <location>
        <position position="293"/>
    </location>
    <ligand>
        <name>substrate</name>
    </ligand>
</feature>
<feature type="site" description="Transition state stabilizer" evidence="1">
    <location>
        <position position="19"/>
    </location>
</feature>
<organism>
    <name type="scientific">Azoarcus sp. (strain BH72)</name>
    <dbReference type="NCBI Taxonomy" id="418699"/>
    <lineage>
        <taxon>Bacteria</taxon>
        <taxon>Pseudomonadati</taxon>
        <taxon>Pseudomonadota</taxon>
        <taxon>Betaproteobacteria</taxon>
        <taxon>Rhodocyclales</taxon>
        <taxon>Zoogloeaceae</taxon>
        <taxon>Azoarcus</taxon>
    </lineage>
</organism>
<accession>A1K6L9</accession>
<keyword id="KW-0058">Aromatic hydrocarbons catabolism</keyword>
<keyword id="KW-0456">Lyase</keyword>
<keyword id="KW-0464">Manganese</keyword>
<keyword id="KW-0479">Metal-binding</keyword>
<keyword id="KW-1185">Reference proteome</keyword>
<dbReference type="EC" id="4.1.3.39" evidence="1"/>
<dbReference type="EMBL" id="AM406670">
    <property type="protein sequence ID" value="CAL94474.1"/>
    <property type="molecule type" value="Genomic_DNA"/>
</dbReference>
<dbReference type="RefSeq" id="WP_011765590.1">
    <property type="nucleotide sequence ID" value="NC_008702.1"/>
</dbReference>
<dbReference type="SMR" id="A1K6L9"/>
<dbReference type="STRING" id="62928.azo1857"/>
<dbReference type="KEGG" id="azo:azo1857"/>
<dbReference type="eggNOG" id="COG0119">
    <property type="taxonomic scope" value="Bacteria"/>
</dbReference>
<dbReference type="HOGENOM" id="CLU_049173_0_0_4"/>
<dbReference type="Proteomes" id="UP000002588">
    <property type="component" value="Chromosome"/>
</dbReference>
<dbReference type="GO" id="GO:0003852">
    <property type="term" value="F:2-isopropylmalate synthase activity"/>
    <property type="evidence" value="ECO:0007669"/>
    <property type="project" value="TreeGrafter"/>
</dbReference>
<dbReference type="GO" id="GO:0008701">
    <property type="term" value="F:4-hydroxy-2-oxovalerate aldolase activity"/>
    <property type="evidence" value="ECO:0007669"/>
    <property type="project" value="UniProtKB-UniRule"/>
</dbReference>
<dbReference type="GO" id="GO:0030145">
    <property type="term" value="F:manganese ion binding"/>
    <property type="evidence" value="ECO:0007669"/>
    <property type="project" value="UniProtKB-UniRule"/>
</dbReference>
<dbReference type="GO" id="GO:0009056">
    <property type="term" value="P:catabolic process"/>
    <property type="evidence" value="ECO:0007669"/>
    <property type="project" value="UniProtKB-KW"/>
</dbReference>
<dbReference type="GO" id="GO:0009098">
    <property type="term" value="P:L-leucine biosynthetic process"/>
    <property type="evidence" value="ECO:0007669"/>
    <property type="project" value="TreeGrafter"/>
</dbReference>
<dbReference type="CDD" id="cd07943">
    <property type="entry name" value="DRE_TIM_HOA"/>
    <property type="match status" value="1"/>
</dbReference>
<dbReference type="Gene3D" id="1.10.8.60">
    <property type="match status" value="1"/>
</dbReference>
<dbReference type="Gene3D" id="3.20.20.70">
    <property type="entry name" value="Aldolase class I"/>
    <property type="match status" value="1"/>
</dbReference>
<dbReference type="HAMAP" id="MF_01656">
    <property type="entry name" value="HOA"/>
    <property type="match status" value="1"/>
</dbReference>
<dbReference type="InterPro" id="IPR050073">
    <property type="entry name" value="2-IPM_HCS-like"/>
</dbReference>
<dbReference type="InterPro" id="IPR017629">
    <property type="entry name" value="4OH_2_O-val_aldolase"/>
</dbReference>
<dbReference type="InterPro" id="IPR013785">
    <property type="entry name" value="Aldolase_TIM"/>
</dbReference>
<dbReference type="InterPro" id="IPR012425">
    <property type="entry name" value="DmpG_comm"/>
</dbReference>
<dbReference type="InterPro" id="IPR035685">
    <property type="entry name" value="DRE_TIM_HOA"/>
</dbReference>
<dbReference type="InterPro" id="IPR000891">
    <property type="entry name" value="PYR_CT"/>
</dbReference>
<dbReference type="NCBIfam" id="TIGR03217">
    <property type="entry name" value="4OH_2_O_val_ald"/>
    <property type="match status" value="1"/>
</dbReference>
<dbReference type="NCBIfam" id="NF006049">
    <property type="entry name" value="PRK08195.1"/>
    <property type="match status" value="1"/>
</dbReference>
<dbReference type="PANTHER" id="PTHR10277:SF9">
    <property type="entry name" value="2-ISOPROPYLMALATE SYNTHASE 1, CHLOROPLASTIC-RELATED"/>
    <property type="match status" value="1"/>
</dbReference>
<dbReference type="PANTHER" id="PTHR10277">
    <property type="entry name" value="HOMOCITRATE SYNTHASE-RELATED"/>
    <property type="match status" value="1"/>
</dbReference>
<dbReference type="Pfam" id="PF07836">
    <property type="entry name" value="DmpG_comm"/>
    <property type="match status" value="1"/>
</dbReference>
<dbReference type="Pfam" id="PF00682">
    <property type="entry name" value="HMGL-like"/>
    <property type="match status" value="1"/>
</dbReference>
<dbReference type="SUPFAM" id="SSF51569">
    <property type="entry name" value="Aldolase"/>
    <property type="match status" value="1"/>
</dbReference>
<dbReference type="SUPFAM" id="SSF89000">
    <property type="entry name" value="post-HMGL domain-like"/>
    <property type="match status" value="1"/>
</dbReference>
<dbReference type="PROSITE" id="PS50991">
    <property type="entry name" value="PYR_CT"/>
    <property type="match status" value="1"/>
</dbReference>